<proteinExistence type="evidence at protein level"/>
<name>LIM7_CAEEL</name>
<protein>
    <recommendedName>
        <fullName evidence="8">LIM/homeobox protein lim-7</fullName>
    </recommendedName>
</protein>
<organism evidence="10">
    <name type="scientific">Caenorhabditis elegans</name>
    <dbReference type="NCBI Taxonomy" id="6239"/>
    <lineage>
        <taxon>Eukaryota</taxon>
        <taxon>Metazoa</taxon>
        <taxon>Ecdysozoa</taxon>
        <taxon>Nematoda</taxon>
        <taxon>Chromadorea</taxon>
        <taxon>Rhabditida</taxon>
        <taxon>Rhabditina</taxon>
        <taxon>Rhabditomorpha</taxon>
        <taxon>Rhabditoidea</taxon>
        <taxon>Rhabditidae</taxon>
        <taxon>Peloderinae</taxon>
        <taxon>Caenorhabditis</taxon>
    </lineage>
</organism>
<dbReference type="EMBL" id="U73946">
    <property type="protein sequence ID" value="AAB18328.1"/>
    <property type="molecule type" value="mRNA"/>
</dbReference>
<dbReference type="EMBL" id="BX284601">
    <property type="protein sequence ID" value="CCD62964.1"/>
    <property type="molecule type" value="Genomic_DNA"/>
</dbReference>
<dbReference type="PIR" id="T33049">
    <property type="entry name" value="T33049"/>
</dbReference>
<dbReference type="RefSeq" id="NP_491668.1">
    <property type="nucleotide sequence ID" value="NM_059267.4"/>
</dbReference>
<dbReference type="SASBDB" id="G5EC36"/>
<dbReference type="SMR" id="G5EC36"/>
<dbReference type="FunCoup" id="G5EC36">
    <property type="interactions" value="334"/>
</dbReference>
<dbReference type="IntAct" id="G5EC36">
    <property type="interactions" value="20"/>
</dbReference>
<dbReference type="STRING" id="6239.C04F1.3.1"/>
<dbReference type="PaxDb" id="6239-C04F1.3"/>
<dbReference type="EnsemblMetazoa" id="C04F1.3.1">
    <property type="protein sequence ID" value="C04F1.3.1"/>
    <property type="gene ID" value="WBGene00002989"/>
</dbReference>
<dbReference type="GeneID" id="172236"/>
<dbReference type="KEGG" id="cel:CELE_C04F1.3"/>
<dbReference type="AGR" id="WB:WBGene00002989"/>
<dbReference type="CTD" id="172236"/>
<dbReference type="WormBase" id="C04F1.3">
    <property type="protein sequence ID" value="CE17366"/>
    <property type="gene ID" value="WBGene00002989"/>
    <property type="gene designation" value="lim-7"/>
</dbReference>
<dbReference type="eggNOG" id="KOG0490">
    <property type="taxonomic scope" value="Eukaryota"/>
</dbReference>
<dbReference type="GeneTree" id="ENSGT00940000153731"/>
<dbReference type="HOGENOM" id="CLU_027802_2_2_1"/>
<dbReference type="InParanoid" id="G5EC36"/>
<dbReference type="OMA" id="CMRSAYE"/>
<dbReference type="OrthoDB" id="125004at2759"/>
<dbReference type="PhylomeDB" id="G5EC36"/>
<dbReference type="PRO" id="PR:G5EC36"/>
<dbReference type="Proteomes" id="UP000001940">
    <property type="component" value="Chromosome I"/>
</dbReference>
<dbReference type="Bgee" id="WBGene00002989">
    <property type="expression patterns" value="Expressed in pharyngeal muscle cell (C elegans) and 3 other cell types or tissues"/>
</dbReference>
<dbReference type="GO" id="GO:0005634">
    <property type="term" value="C:nucleus"/>
    <property type="evidence" value="ECO:0000314"/>
    <property type="project" value="WormBase"/>
</dbReference>
<dbReference type="GO" id="GO:0003677">
    <property type="term" value="F:DNA binding"/>
    <property type="evidence" value="ECO:0007669"/>
    <property type="project" value="UniProtKB-KW"/>
</dbReference>
<dbReference type="GO" id="GO:0000981">
    <property type="term" value="F:DNA-binding transcription factor activity, RNA polymerase II-specific"/>
    <property type="evidence" value="ECO:0007669"/>
    <property type="project" value="InterPro"/>
</dbReference>
<dbReference type="GO" id="GO:0046872">
    <property type="term" value="F:metal ion binding"/>
    <property type="evidence" value="ECO:0007669"/>
    <property type="project" value="UniProtKB-KW"/>
</dbReference>
<dbReference type="GO" id="GO:0007409">
    <property type="term" value="P:axonogenesis"/>
    <property type="evidence" value="ECO:0000318"/>
    <property type="project" value="GO_Central"/>
</dbReference>
<dbReference type="GO" id="GO:0010171">
    <property type="term" value="P:body morphogenesis"/>
    <property type="evidence" value="ECO:0000315"/>
    <property type="project" value="WormBase"/>
</dbReference>
<dbReference type="GO" id="GO:0035262">
    <property type="term" value="P:gonad morphogenesis"/>
    <property type="evidence" value="ECO:0000315"/>
    <property type="project" value="WormBase"/>
</dbReference>
<dbReference type="GO" id="GO:0060323">
    <property type="term" value="P:head morphogenesis"/>
    <property type="evidence" value="ECO:0000315"/>
    <property type="project" value="WormBase"/>
</dbReference>
<dbReference type="GO" id="GO:0040011">
    <property type="term" value="P:locomotion"/>
    <property type="evidence" value="ECO:0000315"/>
    <property type="project" value="WormBase"/>
</dbReference>
<dbReference type="GO" id="GO:0002119">
    <property type="term" value="P:nematode larval development"/>
    <property type="evidence" value="ECO:0000315"/>
    <property type="project" value="WormBase"/>
</dbReference>
<dbReference type="GO" id="GO:0160094">
    <property type="term" value="P:nematode pharynx development"/>
    <property type="evidence" value="ECO:0000315"/>
    <property type="project" value="WormBase"/>
</dbReference>
<dbReference type="GO" id="GO:0048665">
    <property type="term" value="P:neuron fate specification"/>
    <property type="evidence" value="ECO:0000318"/>
    <property type="project" value="GO_Central"/>
</dbReference>
<dbReference type="GO" id="GO:0045944">
    <property type="term" value="P:positive regulation of transcription by RNA polymerase II"/>
    <property type="evidence" value="ECO:0000318"/>
    <property type="project" value="GO_Central"/>
</dbReference>
<dbReference type="CDD" id="cd00086">
    <property type="entry name" value="homeodomain"/>
    <property type="match status" value="1"/>
</dbReference>
<dbReference type="CDD" id="cd09366">
    <property type="entry name" value="LIM1_Isl"/>
    <property type="match status" value="1"/>
</dbReference>
<dbReference type="FunFam" id="1.10.10.60:FF:000041">
    <property type="entry name" value="insulin gene enhancer protein ISL-1"/>
    <property type="match status" value="1"/>
</dbReference>
<dbReference type="Gene3D" id="2.10.110.10">
    <property type="entry name" value="Cysteine Rich Protein"/>
    <property type="match status" value="2"/>
</dbReference>
<dbReference type="Gene3D" id="1.10.10.60">
    <property type="entry name" value="Homeodomain-like"/>
    <property type="match status" value="1"/>
</dbReference>
<dbReference type="InterPro" id="IPR001356">
    <property type="entry name" value="HD"/>
</dbReference>
<dbReference type="InterPro" id="IPR017970">
    <property type="entry name" value="Homeobox_CS"/>
</dbReference>
<dbReference type="InterPro" id="IPR009057">
    <property type="entry name" value="Homeodomain-like_sf"/>
</dbReference>
<dbReference type="InterPro" id="IPR047169">
    <property type="entry name" value="ISL1/2-like"/>
</dbReference>
<dbReference type="InterPro" id="IPR047244">
    <property type="entry name" value="ISL1/2-like_LIM1"/>
</dbReference>
<dbReference type="InterPro" id="IPR001781">
    <property type="entry name" value="Znf_LIM"/>
</dbReference>
<dbReference type="PANTHER" id="PTHR24204">
    <property type="entry name" value="INSULIN GENE ENHANCER PROTEIN"/>
    <property type="match status" value="1"/>
</dbReference>
<dbReference type="PANTHER" id="PTHR24204:SF8">
    <property type="entry name" value="TAILUP, ISOFORM A"/>
    <property type="match status" value="1"/>
</dbReference>
<dbReference type="Pfam" id="PF00046">
    <property type="entry name" value="Homeodomain"/>
    <property type="match status" value="1"/>
</dbReference>
<dbReference type="Pfam" id="PF00412">
    <property type="entry name" value="LIM"/>
    <property type="match status" value="2"/>
</dbReference>
<dbReference type="SMART" id="SM00389">
    <property type="entry name" value="HOX"/>
    <property type="match status" value="1"/>
</dbReference>
<dbReference type="SMART" id="SM00132">
    <property type="entry name" value="LIM"/>
    <property type="match status" value="2"/>
</dbReference>
<dbReference type="SUPFAM" id="SSF57716">
    <property type="entry name" value="Glucocorticoid receptor-like (DNA-binding domain)"/>
    <property type="match status" value="1"/>
</dbReference>
<dbReference type="SUPFAM" id="SSF46689">
    <property type="entry name" value="Homeodomain-like"/>
    <property type="match status" value="1"/>
</dbReference>
<dbReference type="PROSITE" id="PS00027">
    <property type="entry name" value="HOMEOBOX_1"/>
    <property type="match status" value="1"/>
</dbReference>
<dbReference type="PROSITE" id="PS50071">
    <property type="entry name" value="HOMEOBOX_2"/>
    <property type="match status" value="1"/>
</dbReference>
<dbReference type="PROSITE" id="PS00478">
    <property type="entry name" value="LIM_DOMAIN_1"/>
    <property type="match status" value="2"/>
</dbReference>
<dbReference type="PROSITE" id="PS50023">
    <property type="entry name" value="LIM_DOMAIN_2"/>
    <property type="match status" value="2"/>
</dbReference>
<sequence>MNICMRNGYEQFSLTSPGTSDLEIGGSFWKDEPDTKYLCLDSPVEQRQHQPPMAVCAGCRLEISDRYFLRVNPNLEFHAQCLKCVQCSRPLDENQTAFVKNGQTYCRDDYRRLFTTRCSRCHGDFDKTDLVMRAGPQNVFHLNCFACVACEKRLQTGEEFQIKNNSLYCRSDCRGLDNPDTSASVPDYSKLNNNNNNDNNNSSSNFDEDEWDEERSTLTSLDNNTSSPLGSPKSDGVRTPLFGHHNSGSGGSTSSCGKKKKDKQATRVRTVLNENQLKILRDCYSINSRPDATLKERLVEMTGLSARVIRVWFQNKRCKDKKRQIQITENRLNSEREEVLNRVRVNGIGPLMVQPATPHIDNTLGGPIDIQHFAQWNGTPPPPPPQYGNPMMFNSPSTFDVSVILAPVAPNVTSPSEALGPLGASVFPHFSPQHAPFTATSHDISSPAPCGE</sequence>
<accession>G5EC36</accession>
<comment type="function">
    <text evidence="1">Probable DNA-binding transcriptional activator.</text>
</comment>
<comment type="subunit">
    <text evidence="7">Interacts (via LID domain) with ceh-14 (via LIM zinc-binding domains 1 and 2).</text>
</comment>
<comment type="interaction">
    <interactant intactId="EBI-324631">
        <id>G5EC36</id>
    </interactant>
    <interactant intactId="EBI-2411837">
        <id>P20271</id>
        <label>ceh-14</label>
    </interactant>
    <organismsDiffer>false</organismsDiffer>
    <experiments>3</experiments>
</comment>
<comment type="subcellular location">
    <subcellularLocation>
        <location evidence="2 4">Nucleus</location>
    </subcellularLocation>
</comment>
<comment type="tissue specificity">
    <text evidence="6">Expressed in gonadal sheath cells, URA motoneurons, and 10 additional cells near the isthmus and terminal bulb of the pharynx (PubMed:19116151). Expressed in the ALA and BDU cells (PubMed:19116151).</text>
</comment>
<evidence type="ECO:0000250" key="1">
    <source>
        <dbReference type="UniProtKB" id="P61372"/>
    </source>
</evidence>
<evidence type="ECO:0000255" key="2">
    <source>
        <dbReference type="PROSITE-ProRule" id="PRU00108"/>
    </source>
</evidence>
<evidence type="ECO:0000255" key="3">
    <source>
        <dbReference type="PROSITE-ProRule" id="PRU00125"/>
    </source>
</evidence>
<evidence type="ECO:0000255" key="4">
    <source>
        <dbReference type="RuleBase" id="RU000682"/>
    </source>
</evidence>
<evidence type="ECO:0000256" key="5">
    <source>
        <dbReference type="SAM" id="MobiDB-lite"/>
    </source>
</evidence>
<evidence type="ECO:0000269" key="6">
    <source>
    </source>
</evidence>
<evidence type="ECO:0000269" key="7">
    <source>
    </source>
</evidence>
<evidence type="ECO:0000305" key="8"/>
<evidence type="ECO:0000312" key="9">
    <source>
        <dbReference type="EMBL" id="AAB18328.1"/>
    </source>
</evidence>
<evidence type="ECO:0000312" key="10">
    <source>
        <dbReference type="Proteomes" id="UP000001940"/>
    </source>
</evidence>
<evidence type="ECO:0000312" key="11">
    <source>
        <dbReference type="WormBase" id="C04F1.3"/>
    </source>
</evidence>
<reference evidence="9" key="1">
    <citation type="submission" date="1996-10" db="EMBL/GenBank/DDBJ databases">
        <title>CeLIM-7, a novel LIM homeobox gene from C. elegans.</title>
        <authorList>
            <person name="Hobert O."/>
            <person name="Ruvkun G."/>
        </authorList>
    </citation>
    <scope>NUCLEOTIDE SEQUENCE [MRNA]</scope>
    <source>
        <strain evidence="9">Bristol N2</strain>
    </source>
</reference>
<reference evidence="10" key="2">
    <citation type="journal article" date="1998" name="Science">
        <title>Genome sequence of the nematode C. elegans: a platform for investigating biology.</title>
        <authorList>
            <consortium name="The C. elegans sequencing consortium"/>
        </authorList>
    </citation>
    <scope>NUCLEOTIDE SEQUENCE [LARGE SCALE GENOMIC DNA]</scope>
    <source>
        <strain evidence="10">Bristol N2</strain>
    </source>
</reference>
<reference evidence="8" key="3">
    <citation type="journal article" date="2009" name="FEBS Lett.">
        <title>Characterization of the Caenorhabditis elegans Islet LIM-homeodomain ortholog, lim-7.</title>
        <authorList>
            <person name="Voutev R."/>
            <person name="Keating R."/>
            <person name="Hubbard E.J."/>
            <person name="Vallier L.G."/>
        </authorList>
    </citation>
    <scope>TISSUE SPECIFICITY</scope>
    <scope>MUTAGENESIS OF 84-CYS--GLN-161</scope>
</reference>
<reference evidence="8" key="4">
    <citation type="journal article" date="2017" name="Sci. Rep.">
        <title>Interactions between LHX3- and ISL1-family LIM-homeodomain transcription factors are conserved in Caenorhabditis elegans.</title>
        <authorList>
            <person name="Bhati M."/>
            <person name="Llamosas E."/>
            <person name="Jacques D.A."/>
            <person name="Jeffries C.M."/>
            <person name="Dastmalchi S."/>
            <person name="Ripin N."/>
            <person name="Nicholas H.R."/>
            <person name="Matthews J.M."/>
        </authorList>
    </citation>
    <scope>INTERACTION WITH CEH-14</scope>
    <scope>TISSUE SPECIFICITY</scope>
</reference>
<gene>
    <name evidence="11" type="primary">lim-7</name>
    <name evidence="11" type="ORF">C04F1.3</name>
</gene>
<keyword id="KW-0238">DNA-binding</keyword>
<keyword id="KW-0371">Homeobox</keyword>
<keyword id="KW-0440">LIM domain</keyword>
<keyword id="KW-0479">Metal-binding</keyword>
<keyword id="KW-0539">Nucleus</keyword>
<keyword id="KW-1185">Reference proteome</keyword>
<keyword id="KW-0677">Repeat</keyword>
<keyword id="KW-0804">Transcription</keyword>
<keyword id="KW-0805">Transcription regulation</keyword>
<keyword id="KW-0862">Zinc</keyword>
<feature type="chain" id="PRO_0000451292" description="LIM/homeobox protein lim-7">
    <location>
        <begin position="1"/>
        <end position="452"/>
    </location>
</feature>
<feature type="domain" description="LIM zinc-binding 1" evidence="3">
    <location>
        <begin position="54"/>
        <end position="116"/>
    </location>
</feature>
<feature type="domain" description="LIM zinc-binding 2" evidence="3">
    <location>
        <begin position="117"/>
        <end position="179"/>
    </location>
</feature>
<feature type="DNA-binding region" description="Homeobox" evidence="2">
    <location>
        <begin position="265"/>
        <end position="324"/>
    </location>
</feature>
<feature type="region of interest" description="Disordered" evidence="5">
    <location>
        <begin position="184"/>
        <end position="268"/>
    </location>
</feature>
<feature type="region of interest" description="LIM interaction domain (LID)" evidence="7">
    <location>
        <begin position="347"/>
        <end position="376"/>
    </location>
</feature>
<feature type="compositionally biased region" description="Low complexity" evidence="5">
    <location>
        <begin position="192"/>
        <end position="205"/>
    </location>
</feature>
<feature type="compositionally biased region" description="Low complexity" evidence="5">
    <location>
        <begin position="217"/>
        <end position="227"/>
    </location>
</feature>
<feature type="mutagenesis site" description="In tm674; larval (L1 stage) lethality." evidence="6">
    <location>
        <begin position="84"/>
        <end position="161"/>
    </location>
</feature>